<organism>
    <name type="scientific">Shewanella sediminis (strain HAW-EB3)</name>
    <dbReference type="NCBI Taxonomy" id="425104"/>
    <lineage>
        <taxon>Bacteria</taxon>
        <taxon>Pseudomonadati</taxon>
        <taxon>Pseudomonadota</taxon>
        <taxon>Gammaproteobacteria</taxon>
        <taxon>Alteromonadales</taxon>
        <taxon>Shewanellaceae</taxon>
        <taxon>Shewanella</taxon>
    </lineage>
</organism>
<feature type="chain" id="PRO_0000348033" description="tRNA 5-methylaminomethyl-2-thiouridine biosynthesis bifunctional protein MnmC">
    <location>
        <begin position="1"/>
        <end position="712"/>
    </location>
</feature>
<feature type="region of interest" description="tRNA (mnm(5)s(2)U34)-methyltransferase">
    <location>
        <begin position="1"/>
        <end position="268"/>
    </location>
</feature>
<feature type="region of interest" description="FAD-dependent cmnm(5)s(2)U34 oxidoreductase">
    <location>
        <begin position="292"/>
        <end position="712"/>
    </location>
</feature>
<sequence length="712" mass="78823">MPNMRHRVNSLTEEHEENMQMSKLTGHLSSISTLFPVKNDASQTLTLGQLGLGCPCQLVSLWHYLRKNSPSRAVNIKIFESQFDALADFNLKLASLTSPDPRLPRDDEQSTMVEALLRADIVAIEGCQRLIFDDGRVILDIYLGDTLSQLKCILPTSVKGDMTDNSALIAHWNITEKVKAGSLDQAMLWQIAKLSRDNAALSFTDPESKETRQMMALARSVGLRTLETTVSETTVPETQQQTENKNLDTASDAIPLQERRALRHAQSDKFQYCPVSAANEGDEDCDGEIAIIGGGVASTHLALSLAQRNKKVRIFCSDANFAQQASGNKQGAVYPLLTPDNGHLSHYFQQGYLFTRRRLQALVDDKFAVSYDFCGVLQTGFDDRSSARLDKIINGQSWNEKMAYPIDAASATQIAGIDIDKAGIYYPLGGWICPHEFTRAAFDKAARLSDVSVEFNADITRIEQREGLWYLYKSVNVQHSCTDSHTPDDSEELEIGPFANLVLANGQGLTQFKQSEKLPATGFRGQVSHIPSRNALTKLSTVLCSHGYLTPGNNNFHCTGASYVKNPTNLDYCATEQVENLHKIRHSYVDKPWTEDVDITGHSARVGVRMVTRDHAPMMGCAPDTDSMLAQYEQHQHTKESIKFWKETPAPTHKGLFILGGLGSRGLTSGPLAAEALAAQLCGEVIPLSMPMLEMLNPNRFWMRKLIKGKAL</sequence>
<reference key="1">
    <citation type="submission" date="2007-08" db="EMBL/GenBank/DDBJ databases">
        <title>Complete sequence of Shewanella sediminis HAW-EB3.</title>
        <authorList>
            <consortium name="US DOE Joint Genome Institute"/>
            <person name="Copeland A."/>
            <person name="Lucas S."/>
            <person name="Lapidus A."/>
            <person name="Barry K."/>
            <person name="Glavina del Rio T."/>
            <person name="Dalin E."/>
            <person name="Tice H."/>
            <person name="Pitluck S."/>
            <person name="Chertkov O."/>
            <person name="Brettin T."/>
            <person name="Bruce D."/>
            <person name="Detter J.C."/>
            <person name="Han C."/>
            <person name="Schmutz J."/>
            <person name="Larimer F."/>
            <person name="Land M."/>
            <person name="Hauser L."/>
            <person name="Kyrpides N."/>
            <person name="Kim E."/>
            <person name="Zhao J.-S."/>
            <person name="Richardson P."/>
        </authorList>
    </citation>
    <scope>NUCLEOTIDE SEQUENCE [LARGE SCALE GENOMIC DNA]</scope>
    <source>
        <strain>HAW-EB3</strain>
    </source>
</reference>
<comment type="function">
    <text evidence="1">Catalyzes the last two steps in the biosynthesis of 5-methylaminomethyl-2-thiouridine (mnm(5)s(2)U) at the wobble position (U34) in tRNA. Catalyzes the FAD-dependent demodification of cmnm(5)s(2)U34 to nm(5)s(2)U34, followed by the transfer of a methyl group from S-adenosyl-L-methionine to nm(5)s(2)U34, to form mnm(5)s(2)U34.</text>
</comment>
<comment type="catalytic activity">
    <reaction evidence="1">
        <text>5-aminomethyl-2-thiouridine(34) in tRNA + S-adenosyl-L-methionine = 5-methylaminomethyl-2-thiouridine(34) in tRNA + S-adenosyl-L-homocysteine + H(+)</text>
        <dbReference type="Rhea" id="RHEA:19569"/>
        <dbReference type="Rhea" id="RHEA-COMP:10195"/>
        <dbReference type="Rhea" id="RHEA-COMP:10197"/>
        <dbReference type="ChEBI" id="CHEBI:15378"/>
        <dbReference type="ChEBI" id="CHEBI:57856"/>
        <dbReference type="ChEBI" id="CHEBI:59789"/>
        <dbReference type="ChEBI" id="CHEBI:74454"/>
        <dbReference type="ChEBI" id="CHEBI:74455"/>
        <dbReference type="EC" id="2.1.1.61"/>
    </reaction>
</comment>
<comment type="cofactor">
    <cofactor evidence="1">
        <name>FAD</name>
        <dbReference type="ChEBI" id="CHEBI:57692"/>
    </cofactor>
</comment>
<comment type="subcellular location">
    <subcellularLocation>
        <location evidence="1">Cytoplasm</location>
    </subcellularLocation>
</comment>
<comment type="similarity">
    <text evidence="1">In the N-terminal section; belongs to the methyltransferase superfamily. tRNA (mnm(5)s(2)U34)-methyltransferase family.</text>
</comment>
<comment type="similarity">
    <text evidence="1">In the C-terminal section; belongs to the DAO family.</text>
</comment>
<gene>
    <name evidence="1" type="primary">mnmC</name>
    <name type="ordered locus">Ssed_1643</name>
</gene>
<dbReference type="EC" id="2.1.1.61" evidence="1"/>
<dbReference type="EC" id="1.5.-.-" evidence="1"/>
<dbReference type="EMBL" id="CP000821">
    <property type="protein sequence ID" value="ABV36254.1"/>
    <property type="molecule type" value="Genomic_DNA"/>
</dbReference>
<dbReference type="SMR" id="A8FTT1"/>
<dbReference type="STRING" id="425104.Ssed_1643"/>
<dbReference type="KEGG" id="sse:Ssed_1643"/>
<dbReference type="eggNOG" id="COG0665">
    <property type="taxonomic scope" value="Bacteria"/>
</dbReference>
<dbReference type="eggNOG" id="COG4121">
    <property type="taxonomic scope" value="Bacteria"/>
</dbReference>
<dbReference type="HOGENOM" id="CLU_022427_2_1_6"/>
<dbReference type="OrthoDB" id="9786494at2"/>
<dbReference type="Proteomes" id="UP000002015">
    <property type="component" value="Chromosome"/>
</dbReference>
<dbReference type="GO" id="GO:0005737">
    <property type="term" value="C:cytoplasm"/>
    <property type="evidence" value="ECO:0007669"/>
    <property type="project" value="UniProtKB-SubCell"/>
</dbReference>
<dbReference type="GO" id="GO:0050660">
    <property type="term" value="F:flavin adenine dinucleotide binding"/>
    <property type="evidence" value="ECO:0007669"/>
    <property type="project" value="UniProtKB-UniRule"/>
</dbReference>
<dbReference type="GO" id="GO:0016645">
    <property type="term" value="F:oxidoreductase activity, acting on the CH-NH group of donors"/>
    <property type="evidence" value="ECO:0007669"/>
    <property type="project" value="InterPro"/>
</dbReference>
<dbReference type="GO" id="GO:0004808">
    <property type="term" value="F:tRNA (5-methylaminomethyl-2-thiouridylate)(34)-methyltransferase activity"/>
    <property type="evidence" value="ECO:0007669"/>
    <property type="project" value="UniProtKB-EC"/>
</dbReference>
<dbReference type="GO" id="GO:0032259">
    <property type="term" value="P:methylation"/>
    <property type="evidence" value="ECO:0007669"/>
    <property type="project" value="UniProtKB-KW"/>
</dbReference>
<dbReference type="GO" id="GO:0002098">
    <property type="term" value="P:tRNA wobble uridine modification"/>
    <property type="evidence" value="ECO:0007669"/>
    <property type="project" value="TreeGrafter"/>
</dbReference>
<dbReference type="Gene3D" id="3.30.9.10">
    <property type="entry name" value="D-Amino Acid Oxidase, subunit A, domain 2"/>
    <property type="match status" value="1"/>
</dbReference>
<dbReference type="Gene3D" id="3.50.50.60">
    <property type="entry name" value="FAD/NAD(P)-binding domain"/>
    <property type="match status" value="1"/>
</dbReference>
<dbReference type="Gene3D" id="3.40.50.150">
    <property type="entry name" value="Vaccinia Virus protein VP39"/>
    <property type="match status" value="1"/>
</dbReference>
<dbReference type="HAMAP" id="MF_01102">
    <property type="entry name" value="MnmC"/>
    <property type="match status" value="1"/>
</dbReference>
<dbReference type="InterPro" id="IPR006076">
    <property type="entry name" value="FAD-dep_OxRdtase"/>
</dbReference>
<dbReference type="InterPro" id="IPR036188">
    <property type="entry name" value="FAD/NAD-bd_sf"/>
</dbReference>
<dbReference type="InterPro" id="IPR029063">
    <property type="entry name" value="SAM-dependent_MTases_sf"/>
</dbReference>
<dbReference type="InterPro" id="IPR023032">
    <property type="entry name" value="tRNA_MAMT_biosynth_bifunc_MnmC"/>
</dbReference>
<dbReference type="InterPro" id="IPR017610">
    <property type="entry name" value="tRNA_S-uridine_synth_MnmC_C"/>
</dbReference>
<dbReference type="NCBIfam" id="TIGR03197">
    <property type="entry name" value="MnmC_Cterm"/>
    <property type="match status" value="1"/>
</dbReference>
<dbReference type="PANTHER" id="PTHR13847">
    <property type="entry name" value="SARCOSINE DEHYDROGENASE-RELATED"/>
    <property type="match status" value="1"/>
</dbReference>
<dbReference type="PANTHER" id="PTHR13847:SF283">
    <property type="entry name" value="TRNA 5-METHYLAMINOMETHYL-2-THIOURIDINE BIOSYNTHESIS BIFUNCTIONAL PROTEIN MNMC"/>
    <property type="match status" value="1"/>
</dbReference>
<dbReference type="Pfam" id="PF01266">
    <property type="entry name" value="DAO"/>
    <property type="match status" value="1"/>
</dbReference>
<dbReference type="SUPFAM" id="SSF51905">
    <property type="entry name" value="FAD/NAD(P)-binding domain"/>
    <property type="match status" value="1"/>
</dbReference>
<name>MNMC_SHESH</name>
<evidence type="ECO:0000255" key="1">
    <source>
        <dbReference type="HAMAP-Rule" id="MF_01102"/>
    </source>
</evidence>
<accession>A8FTT1</accession>
<protein>
    <recommendedName>
        <fullName evidence="1">tRNA 5-methylaminomethyl-2-thiouridine biosynthesis bifunctional protein MnmC</fullName>
        <shortName evidence="1">tRNA mnm(5)s(2)U biosynthesis bifunctional protein</shortName>
    </recommendedName>
    <domain>
        <recommendedName>
            <fullName evidence="1">tRNA (mnm(5)s(2)U34)-methyltransferase</fullName>
            <ecNumber evidence="1">2.1.1.61</ecNumber>
        </recommendedName>
    </domain>
    <domain>
        <recommendedName>
            <fullName evidence="1">FAD-dependent cmnm(5)s(2)U34 oxidoreductase</fullName>
            <ecNumber evidence="1">1.5.-.-</ecNumber>
        </recommendedName>
    </domain>
</protein>
<keyword id="KW-0963">Cytoplasm</keyword>
<keyword id="KW-0274">FAD</keyword>
<keyword id="KW-0285">Flavoprotein</keyword>
<keyword id="KW-0489">Methyltransferase</keyword>
<keyword id="KW-0511">Multifunctional enzyme</keyword>
<keyword id="KW-0560">Oxidoreductase</keyword>
<keyword id="KW-1185">Reference proteome</keyword>
<keyword id="KW-0949">S-adenosyl-L-methionine</keyword>
<keyword id="KW-0808">Transferase</keyword>
<keyword id="KW-0819">tRNA processing</keyword>
<proteinExistence type="inferred from homology"/>